<evidence type="ECO:0000255" key="1">
    <source>
        <dbReference type="HAMAP-Rule" id="MF_01366"/>
    </source>
</evidence>
<evidence type="ECO:0000305" key="2"/>
<gene>
    <name evidence="1" type="primary">rplM</name>
    <name type="ordered locus">KPN78578_35990</name>
    <name type="ORF">KPN_03630</name>
</gene>
<name>RL13_KLEP7</name>
<accession>A6TEN9</accession>
<dbReference type="EMBL" id="CP000647">
    <property type="protein sequence ID" value="ABR79023.1"/>
    <property type="molecule type" value="Genomic_DNA"/>
</dbReference>
<dbReference type="RefSeq" id="WP_002918559.1">
    <property type="nucleotide sequence ID" value="NC_009648.1"/>
</dbReference>
<dbReference type="SMR" id="A6TEN9"/>
<dbReference type="STRING" id="272620.KPN_03630"/>
<dbReference type="jPOST" id="A6TEN9"/>
<dbReference type="PaxDb" id="272620-KPN_03630"/>
<dbReference type="EnsemblBacteria" id="ABR79023">
    <property type="protein sequence ID" value="ABR79023"/>
    <property type="gene ID" value="KPN_03630"/>
</dbReference>
<dbReference type="GeneID" id="93314031"/>
<dbReference type="KEGG" id="kpn:KPN_03630"/>
<dbReference type="HOGENOM" id="CLU_082184_2_2_6"/>
<dbReference type="Proteomes" id="UP000000265">
    <property type="component" value="Chromosome"/>
</dbReference>
<dbReference type="GO" id="GO:0022625">
    <property type="term" value="C:cytosolic large ribosomal subunit"/>
    <property type="evidence" value="ECO:0007669"/>
    <property type="project" value="TreeGrafter"/>
</dbReference>
<dbReference type="GO" id="GO:0003729">
    <property type="term" value="F:mRNA binding"/>
    <property type="evidence" value="ECO:0007669"/>
    <property type="project" value="TreeGrafter"/>
</dbReference>
<dbReference type="GO" id="GO:0003735">
    <property type="term" value="F:structural constituent of ribosome"/>
    <property type="evidence" value="ECO:0007669"/>
    <property type="project" value="InterPro"/>
</dbReference>
<dbReference type="GO" id="GO:0017148">
    <property type="term" value="P:negative regulation of translation"/>
    <property type="evidence" value="ECO:0007669"/>
    <property type="project" value="TreeGrafter"/>
</dbReference>
<dbReference type="GO" id="GO:0006412">
    <property type="term" value="P:translation"/>
    <property type="evidence" value="ECO:0007669"/>
    <property type="project" value="UniProtKB-UniRule"/>
</dbReference>
<dbReference type="CDD" id="cd00392">
    <property type="entry name" value="Ribosomal_L13"/>
    <property type="match status" value="1"/>
</dbReference>
<dbReference type="FunFam" id="3.90.1180.10:FF:000001">
    <property type="entry name" value="50S ribosomal protein L13"/>
    <property type="match status" value="1"/>
</dbReference>
<dbReference type="Gene3D" id="3.90.1180.10">
    <property type="entry name" value="Ribosomal protein L13"/>
    <property type="match status" value="1"/>
</dbReference>
<dbReference type="HAMAP" id="MF_01366">
    <property type="entry name" value="Ribosomal_uL13"/>
    <property type="match status" value="1"/>
</dbReference>
<dbReference type="InterPro" id="IPR005822">
    <property type="entry name" value="Ribosomal_uL13"/>
</dbReference>
<dbReference type="InterPro" id="IPR005823">
    <property type="entry name" value="Ribosomal_uL13_bac-type"/>
</dbReference>
<dbReference type="InterPro" id="IPR023563">
    <property type="entry name" value="Ribosomal_uL13_CS"/>
</dbReference>
<dbReference type="InterPro" id="IPR036899">
    <property type="entry name" value="Ribosomal_uL13_sf"/>
</dbReference>
<dbReference type="NCBIfam" id="TIGR01066">
    <property type="entry name" value="rplM_bact"/>
    <property type="match status" value="1"/>
</dbReference>
<dbReference type="PANTHER" id="PTHR11545:SF2">
    <property type="entry name" value="LARGE RIBOSOMAL SUBUNIT PROTEIN UL13M"/>
    <property type="match status" value="1"/>
</dbReference>
<dbReference type="PANTHER" id="PTHR11545">
    <property type="entry name" value="RIBOSOMAL PROTEIN L13"/>
    <property type="match status" value="1"/>
</dbReference>
<dbReference type="Pfam" id="PF00572">
    <property type="entry name" value="Ribosomal_L13"/>
    <property type="match status" value="1"/>
</dbReference>
<dbReference type="PIRSF" id="PIRSF002181">
    <property type="entry name" value="Ribosomal_L13"/>
    <property type="match status" value="1"/>
</dbReference>
<dbReference type="SUPFAM" id="SSF52161">
    <property type="entry name" value="Ribosomal protein L13"/>
    <property type="match status" value="1"/>
</dbReference>
<dbReference type="PROSITE" id="PS00783">
    <property type="entry name" value="RIBOSOMAL_L13"/>
    <property type="match status" value="1"/>
</dbReference>
<reference key="1">
    <citation type="submission" date="2006-09" db="EMBL/GenBank/DDBJ databases">
        <authorList>
            <consortium name="The Klebsiella pneumonia Genome Sequencing Project"/>
            <person name="McClelland M."/>
            <person name="Sanderson E.K."/>
            <person name="Spieth J."/>
            <person name="Clifton W.S."/>
            <person name="Latreille P."/>
            <person name="Sabo A."/>
            <person name="Pepin K."/>
            <person name="Bhonagiri V."/>
            <person name="Porwollik S."/>
            <person name="Ali J."/>
            <person name="Wilson R.K."/>
        </authorList>
    </citation>
    <scope>NUCLEOTIDE SEQUENCE [LARGE SCALE GENOMIC DNA]</scope>
    <source>
        <strain>ATCC 700721 / MGH 78578</strain>
    </source>
</reference>
<protein>
    <recommendedName>
        <fullName evidence="1">Large ribosomal subunit protein uL13</fullName>
    </recommendedName>
    <alternativeName>
        <fullName evidence="2">50S ribosomal protein L13</fullName>
    </alternativeName>
</protein>
<feature type="chain" id="PRO_1000055395" description="Large ribosomal subunit protein uL13">
    <location>
        <begin position="1"/>
        <end position="142"/>
    </location>
</feature>
<organism>
    <name type="scientific">Klebsiella pneumoniae subsp. pneumoniae (strain ATCC 700721 / MGH 78578)</name>
    <dbReference type="NCBI Taxonomy" id="272620"/>
    <lineage>
        <taxon>Bacteria</taxon>
        <taxon>Pseudomonadati</taxon>
        <taxon>Pseudomonadota</taxon>
        <taxon>Gammaproteobacteria</taxon>
        <taxon>Enterobacterales</taxon>
        <taxon>Enterobacteriaceae</taxon>
        <taxon>Klebsiella/Raoultella group</taxon>
        <taxon>Klebsiella</taxon>
        <taxon>Klebsiella pneumoniae complex</taxon>
    </lineage>
</organism>
<proteinExistence type="inferred from homology"/>
<sequence length="142" mass="16110">MKTFTAKPETVKRDWYVVDATGKTLGRLATELARRLRGKHKAEYTPHVDTGDYIIVLNAEKVAVTGNKREDKMYYHHTGHIGGIKEATFEEMIARRPERVIEIAVKGMLPKGPLGRAMYRKLKVYAGNEHNHAAQQPQVLDI</sequence>
<comment type="function">
    <text evidence="1">This protein is one of the early assembly proteins of the 50S ribosomal subunit, although it is not seen to bind rRNA by itself. It is important during the early stages of 50S assembly.</text>
</comment>
<comment type="subunit">
    <text evidence="1">Part of the 50S ribosomal subunit.</text>
</comment>
<comment type="similarity">
    <text evidence="1">Belongs to the universal ribosomal protein uL13 family.</text>
</comment>
<keyword id="KW-0687">Ribonucleoprotein</keyword>
<keyword id="KW-0689">Ribosomal protein</keyword>